<name>METN_XANE5</name>
<protein>
    <recommendedName>
        <fullName evidence="1">Methionine import ATP-binding protein MetN</fullName>
        <ecNumber evidence="1">7.4.2.11</ecNumber>
    </recommendedName>
</protein>
<dbReference type="EC" id="7.4.2.11" evidence="1"/>
<dbReference type="EMBL" id="AM039952">
    <property type="protein sequence ID" value="CAJ25520.1"/>
    <property type="molecule type" value="Genomic_DNA"/>
</dbReference>
<dbReference type="RefSeq" id="WP_008578010.1">
    <property type="nucleotide sequence ID" value="NZ_CP017190.1"/>
</dbReference>
<dbReference type="SMR" id="Q3BNZ3"/>
<dbReference type="STRING" id="456327.BJD11_03700"/>
<dbReference type="KEGG" id="xcv:XCV3789"/>
<dbReference type="eggNOG" id="COG1135">
    <property type="taxonomic scope" value="Bacteria"/>
</dbReference>
<dbReference type="HOGENOM" id="CLU_000604_1_3_6"/>
<dbReference type="Proteomes" id="UP000007069">
    <property type="component" value="Chromosome"/>
</dbReference>
<dbReference type="GO" id="GO:0005886">
    <property type="term" value="C:plasma membrane"/>
    <property type="evidence" value="ECO:0007669"/>
    <property type="project" value="UniProtKB-SubCell"/>
</dbReference>
<dbReference type="GO" id="GO:0033232">
    <property type="term" value="F:ABC-type D-methionine transporter activity"/>
    <property type="evidence" value="ECO:0007669"/>
    <property type="project" value="UniProtKB-EC"/>
</dbReference>
<dbReference type="GO" id="GO:0005524">
    <property type="term" value="F:ATP binding"/>
    <property type="evidence" value="ECO:0007669"/>
    <property type="project" value="UniProtKB-KW"/>
</dbReference>
<dbReference type="GO" id="GO:0016887">
    <property type="term" value="F:ATP hydrolysis activity"/>
    <property type="evidence" value="ECO:0007669"/>
    <property type="project" value="InterPro"/>
</dbReference>
<dbReference type="CDD" id="cd03258">
    <property type="entry name" value="ABC_MetN_methionine_transporter"/>
    <property type="match status" value="1"/>
</dbReference>
<dbReference type="FunFam" id="3.40.50.300:FF:000056">
    <property type="entry name" value="Cell division ATP-binding protein FtsE"/>
    <property type="match status" value="1"/>
</dbReference>
<dbReference type="Gene3D" id="3.30.70.260">
    <property type="match status" value="1"/>
</dbReference>
<dbReference type="Gene3D" id="3.40.50.300">
    <property type="entry name" value="P-loop containing nucleotide triphosphate hydrolases"/>
    <property type="match status" value="1"/>
</dbReference>
<dbReference type="InterPro" id="IPR003593">
    <property type="entry name" value="AAA+_ATPase"/>
</dbReference>
<dbReference type="InterPro" id="IPR003439">
    <property type="entry name" value="ABC_transporter-like_ATP-bd"/>
</dbReference>
<dbReference type="InterPro" id="IPR017871">
    <property type="entry name" value="ABC_transporter-like_CS"/>
</dbReference>
<dbReference type="InterPro" id="IPR045865">
    <property type="entry name" value="ACT-like_dom_sf"/>
</dbReference>
<dbReference type="InterPro" id="IPR041701">
    <property type="entry name" value="MetN_ABC"/>
</dbReference>
<dbReference type="InterPro" id="IPR050086">
    <property type="entry name" value="MetN_ABC_transporter-like"/>
</dbReference>
<dbReference type="InterPro" id="IPR018449">
    <property type="entry name" value="NIL_domain"/>
</dbReference>
<dbReference type="InterPro" id="IPR027417">
    <property type="entry name" value="P-loop_NTPase"/>
</dbReference>
<dbReference type="PANTHER" id="PTHR43166">
    <property type="entry name" value="AMINO ACID IMPORT ATP-BINDING PROTEIN"/>
    <property type="match status" value="1"/>
</dbReference>
<dbReference type="PANTHER" id="PTHR43166:SF30">
    <property type="entry name" value="METHIONINE IMPORT ATP-BINDING PROTEIN METN"/>
    <property type="match status" value="1"/>
</dbReference>
<dbReference type="Pfam" id="PF00005">
    <property type="entry name" value="ABC_tran"/>
    <property type="match status" value="1"/>
</dbReference>
<dbReference type="Pfam" id="PF09383">
    <property type="entry name" value="NIL"/>
    <property type="match status" value="1"/>
</dbReference>
<dbReference type="SMART" id="SM00382">
    <property type="entry name" value="AAA"/>
    <property type="match status" value="1"/>
</dbReference>
<dbReference type="SMART" id="SM00930">
    <property type="entry name" value="NIL"/>
    <property type="match status" value="1"/>
</dbReference>
<dbReference type="SUPFAM" id="SSF55021">
    <property type="entry name" value="ACT-like"/>
    <property type="match status" value="1"/>
</dbReference>
<dbReference type="SUPFAM" id="SSF52540">
    <property type="entry name" value="P-loop containing nucleoside triphosphate hydrolases"/>
    <property type="match status" value="1"/>
</dbReference>
<dbReference type="PROSITE" id="PS00211">
    <property type="entry name" value="ABC_TRANSPORTER_1"/>
    <property type="match status" value="1"/>
</dbReference>
<dbReference type="PROSITE" id="PS50893">
    <property type="entry name" value="ABC_TRANSPORTER_2"/>
    <property type="match status" value="1"/>
</dbReference>
<dbReference type="PROSITE" id="PS51264">
    <property type="entry name" value="METN"/>
    <property type="match status" value="1"/>
</dbReference>
<organism>
    <name type="scientific">Xanthomonas euvesicatoria pv. vesicatoria (strain 85-10)</name>
    <name type="common">Xanthomonas campestris pv. vesicatoria</name>
    <dbReference type="NCBI Taxonomy" id="316273"/>
    <lineage>
        <taxon>Bacteria</taxon>
        <taxon>Pseudomonadati</taxon>
        <taxon>Pseudomonadota</taxon>
        <taxon>Gammaproteobacteria</taxon>
        <taxon>Lysobacterales</taxon>
        <taxon>Lysobacteraceae</taxon>
        <taxon>Xanthomonas</taxon>
    </lineage>
</organism>
<reference key="1">
    <citation type="journal article" date="2005" name="J. Bacteriol.">
        <title>Insights into genome plasticity and pathogenicity of the plant pathogenic Bacterium Xanthomonas campestris pv. vesicatoria revealed by the complete genome sequence.</title>
        <authorList>
            <person name="Thieme F."/>
            <person name="Koebnik R."/>
            <person name="Bekel T."/>
            <person name="Berger C."/>
            <person name="Boch J."/>
            <person name="Buettner D."/>
            <person name="Caldana C."/>
            <person name="Gaigalat L."/>
            <person name="Goesmann A."/>
            <person name="Kay S."/>
            <person name="Kirchner O."/>
            <person name="Lanz C."/>
            <person name="Linke B."/>
            <person name="McHardy A.C."/>
            <person name="Meyer F."/>
            <person name="Mittenhuber G."/>
            <person name="Nies D.H."/>
            <person name="Niesbach-Kloesgen U."/>
            <person name="Patschkowski T."/>
            <person name="Rueckert C."/>
            <person name="Rupp O."/>
            <person name="Schneiker S."/>
            <person name="Schuster S.C."/>
            <person name="Vorhoelter F.J."/>
            <person name="Weber E."/>
            <person name="Puehler A."/>
            <person name="Bonas U."/>
            <person name="Bartels D."/>
            <person name="Kaiser O."/>
        </authorList>
    </citation>
    <scope>NUCLEOTIDE SEQUENCE [LARGE SCALE GENOMIC DNA]</scope>
    <source>
        <strain>85-10</strain>
    </source>
</reference>
<proteinExistence type="inferred from homology"/>
<feature type="chain" id="PRO_0000270442" description="Methionine import ATP-binding protein MetN">
    <location>
        <begin position="1"/>
        <end position="335"/>
    </location>
</feature>
<feature type="domain" description="ABC transporter" evidence="1">
    <location>
        <begin position="2"/>
        <end position="241"/>
    </location>
</feature>
<feature type="binding site" evidence="1">
    <location>
        <begin position="38"/>
        <end position="45"/>
    </location>
    <ligand>
        <name>ATP</name>
        <dbReference type="ChEBI" id="CHEBI:30616"/>
    </ligand>
</feature>
<gene>
    <name evidence="1" type="primary">metN</name>
    <name type="ordered locus">XCV3789</name>
</gene>
<comment type="function">
    <text evidence="1">Part of the ABC transporter complex MetNIQ involved in methionine import. Responsible for energy coupling to the transport system.</text>
</comment>
<comment type="catalytic activity">
    <reaction evidence="1">
        <text>L-methionine(out) + ATP + H2O = L-methionine(in) + ADP + phosphate + H(+)</text>
        <dbReference type="Rhea" id="RHEA:29779"/>
        <dbReference type="ChEBI" id="CHEBI:15377"/>
        <dbReference type="ChEBI" id="CHEBI:15378"/>
        <dbReference type="ChEBI" id="CHEBI:30616"/>
        <dbReference type="ChEBI" id="CHEBI:43474"/>
        <dbReference type="ChEBI" id="CHEBI:57844"/>
        <dbReference type="ChEBI" id="CHEBI:456216"/>
        <dbReference type="EC" id="7.4.2.11"/>
    </reaction>
</comment>
<comment type="catalytic activity">
    <reaction evidence="1">
        <text>D-methionine(out) + ATP + H2O = D-methionine(in) + ADP + phosphate + H(+)</text>
        <dbReference type="Rhea" id="RHEA:29767"/>
        <dbReference type="ChEBI" id="CHEBI:15377"/>
        <dbReference type="ChEBI" id="CHEBI:15378"/>
        <dbReference type="ChEBI" id="CHEBI:30616"/>
        <dbReference type="ChEBI" id="CHEBI:43474"/>
        <dbReference type="ChEBI" id="CHEBI:57932"/>
        <dbReference type="ChEBI" id="CHEBI:456216"/>
        <dbReference type="EC" id="7.4.2.11"/>
    </reaction>
</comment>
<comment type="subunit">
    <text evidence="1">The complex is composed of two ATP-binding proteins (MetN), two transmembrane proteins (MetI) and a solute-binding protein (MetQ).</text>
</comment>
<comment type="subcellular location">
    <subcellularLocation>
        <location evidence="1">Cell inner membrane</location>
        <topology evidence="1">Peripheral membrane protein</topology>
    </subcellularLocation>
</comment>
<comment type="similarity">
    <text evidence="1">Belongs to the ABC transporter superfamily. Methionine importer (TC 3.A.1.24) family.</text>
</comment>
<evidence type="ECO:0000255" key="1">
    <source>
        <dbReference type="HAMAP-Rule" id="MF_01719"/>
    </source>
</evidence>
<keyword id="KW-0029">Amino-acid transport</keyword>
<keyword id="KW-0067">ATP-binding</keyword>
<keyword id="KW-0997">Cell inner membrane</keyword>
<keyword id="KW-1003">Cell membrane</keyword>
<keyword id="KW-0472">Membrane</keyword>
<keyword id="KW-0547">Nucleotide-binding</keyword>
<keyword id="KW-1278">Translocase</keyword>
<keyword id="KW-0813">Transport</keyword>
<sequence length="335" mass="36380">MIQFQRLHKSYSVDGRQIVALHPLDLRIGPGEVFGIIGHSGAGKSTLIRLINRLEEPSGGRLLIGDEDVTALDGQGLRALRRRIGMIFQHFNLLSSRTVAGNVAFPLELAGTPRAEIDARVAELLARVGLQEHANKYPAQLSGGQKQRVGIARALATRPQILLCDEATSALDPQTTASVLQLLAQINRELGLTIVLITHEMDVIRRVCDRVAVLDAGKLVETGPVTEVFLHPKHATTRRFVSEAEHVDEAELHRDFAAVGGRIVRLTFLGNGTYEPVLGRIARETGVDYNILSGRVDRIKDTPYGQLIVALTGGDQNAARAGFVAAGVQVEDLRV</sequence>
<accession>Q3BNZ3</accession>